<evidence type="ECO:0000250" key="1"/>
<evidence type="ECO:0000255" key="2"/>
<evidence type="ECO:0000269" key="3">
    <source>
    </source>
</evidence>
<evidence type="ECO:0000305" key="4"/>
<protein>
    <recommendedName>
        <fullName>Protein NRT1/ PTR FAMILY 4.7</fullName>
        <shortName>AtNPF4.7</shortName>
    </recommendedName>
</protein>
<name>PTR54_ARATH</name>
<feature type="chain" id="PRO_0000399988" description="Protein NRT1/ PTR FAMILY 4.7">
    <location>
        <begin position="1"/>
        <end position="589"/>
    </location>
</feature>
<feature type="transmembrane region" description="Helical" evidence="2">
    <location>
        <begin position="59"/>
        <end position="79"/>
    </location>
</feature>
<feature type="transmembrane region" description="Helical" evidence="2">
    <location>
        <begin position="105"/>
        <end position="125"/>
    </location>
</feature>
<feature type="transmembrane region" description="Helical" evidence="2">
    <location>
        <begin position="127"/>
        <end position="147"/>
    </location>
</feature>
<feature type="transmembrane region" description="Helical" evidence="2">
    <location>
        <begin position="160"/>
        <end position="180"/>
    </location>
</feature>
<feature type="transmembrane region" description="Helical" evidence="2">
    <location>
        <begin position="201"/>
        <end position="221"/>
    </location>
</feature>
<feature type="transmembrane region" description="Helical" evidence="2">
    <location>
        <begin position="230"/>
        <end position="250"/>
    </location>
</feature>
<feature type="transmembrane region" description="Helical" evidence="2">
    <location>
        <begin position="344"/>
        <end position="364"/>
    </location>
</feature>
<feature type="transmembrane region" description="Helical" evidence="2">
    <location>
        <begin position="383"/>
        <end position="403"/>
    </location>
</feature>
<feature type="transmembrane region" description="Helical" evidence="2">
    <location>
        <begin position="429"/>
        <end position="449"/>
    </location>
</feature>
<feature type="transmembrane region" description="Helical" evidence="2">
    <location>
        <begin position="471"/>
        <end position="491"/>
    </location>
</feature>
<feature type="transmembrane region" description="Helical" evidence="2">
    <location>
        <begin position="520"/>
        <end position="540"/>
    </location>
</feature>
<feature type="transmembrane region" description="Helical" evidence="2">
    <location>
        <begin position="560"/>
        <end position="580"/>
    </location>
</feature>
<reference key="1">
    <citation type="journal article" date="1998" name="DNA Res.">
        <title>Structural analysis of Arabidopsis thaliana chromosome 5. IV. Sequence features of the regions of 1,456,315 bp covered by nineteen physically assigned P1 and TAC clones.</title>
        <authorList>
            <person name="Sato S."/>
            <person name="Kaneko T."/>
            <person name="Kotani H."/>
            <person name="Nakamura Y."/>
            <person name="Asamizu E."/>
            <person name="Miyajima N."/>
            <person name="Tabata S."/>
        </authorList>
    </citation>
    <scope>NUCLEOTIDE SEQUENCE [LARGE SCALE GENOMIC DNA]</scope>
    <source>
        <strain>cv. Columbia</strain>
    </source>
</reference>
<reference key="2">
    <citation type="journal article" date="2017" name="Plant J.">
        <title>Araport11: a complete reannotation of the Arabidopsis thaliana reference genome.</title>
        <authorList>
            <person name="Cheng C.Y."/>
            <person name="Krishnakumar V."/>
            <person name="Chan A.P."/>
            <person name="Thibaud-Nissen F."/>
            <person name="Schobel S."/>
            <person name="Town C.D."/>
        </authorList>
    </citation>
    <scope>GENOME REANNOTATION</scope>
    <source>
        <strain>cv. Columbia</strain>
    </source>
</reference>
<reference key="3">
    <citation type="journal article" date="2007" name="FEBS Lett.">
        <title>Nitrate transporters and peptide transporters.</title>
        <authorList>
            <person name="Tsay Y.F."/>
            <person name="Chiu C.C."/>
            <person name="Tsai C.B."/>
            <person name="Ho C.H."/>
            <person name="Hsu P.K."/>
        </authorList>
    </citation>
    <scope>TISSUE SPECIFICITY</scope>
    <scope>GENE FAMILY</scope>
</reference>
<reference key="4">
    <citation type="journal article" date="2010" name="Plant Cell">
        <title>The Arabidopsis nitrate transporter NRT1.8 functions in nitrate removal from the xylem sap and mediates cadmium tolerance.</title>
        <authorList>
            <person name="Li J.Y."/>
            <person name="Fu Y.L."/>
            <person name="Pike S.M."/>
            <person name="Bao J."/>
            <person name="Tian W."/>
            <person name="Zhang Y."/>
            <person name="Chen C.Z."/>
            <person name="Zhang Y."/>
            <person name="Li H.M."/>
            <person name="Huang J."/>
            <person name="Li L.G."/>
            <person name="Schroeder J.I."/>
            <person name="Gassmann W."/>
            <person name="Gong J.M."/>
        </authorList>
    </citation>
    <scope>GENE FAMILY</scope>
</reference>
<reference key="5">
    <citation type="journal article" date="2014" name="Trends Plant Sci.">
        <title>A unified nomenclature of NITRATE TRANSPORTER 1/PEPTIDE TRANSPORTER family members in plants.</title>
        <authorList>
            <person name="Leran S."/>
            <person name="Varala K."/>
            <person name="Boyer J.C."/>
            <person name="Chiurazzi M."/>
            <person name="Crawford N."/>
            <person name="Daniel-Vedele F."/>
            <person name="David L."/>
            <person name="Dickstein R."/>
            <person name="Fernandez E."/>
            <person name="Forde B."/>
            <person name="Gassmann W."/>
            <person name="Geiger D."/>
            <person name="Gojon A."/>
            <person name="Gong J.M."/>
            <person name="Halkier B.A."/>
            <person name="Harris J.M."/>
            <person name="Hedrich R."/>
            <person name="Limami A.M."/>
            <person name="Rentsch D."/>
            <person name="Seo M."/>
            <person name="Tsay Y.F."/>
            <person name="Zhang M."/>
            <person name="Coruzzi G."/>
            <person name="Lacombe B."/>
        </authorList>
    </citation>
    <scope>GENE FAMILY</scope>
    <scope>NOMENCLATURE</scope>
</reference>
<dbReference type="EMBL" id="AB009053">
    <property type="protein sequence ID" value="BAB10842.1"/>
    <property type="status" value="ALT_INIT"/>
    <property type="molecule type" value="Genomic_DNA"/>
</dbReference>
<dbReference type="EMBL" id="CP002688">
    <property type="protein sequence ID" value="AED97648.1"/>
    <property type="molecule type" value="Genomic_DNA"/>
</dbReference>
<dbReference type="RefSeq" id="NP_201079.1">
    <property type="nucleotide sequence ID" value="NM_125668.2"/>
</dbReference>
<dbReference type="SMR" id="Q9FM20"/>
<dbReference type="STRING" id="3702.Q9FM20"/>
<dbReference type="PaxDb" id="3702-AT5G62730.1"/>
<dbReference type="ProteomicsDB" id="226429"/>
<dbReference type="EnsemblPlants" id="AT5G62730.1">
    <property type="protein sequence ID" value="AT5G62730.1"/>
    <property type="gene ID" value="AT5G62730"/>
</dbReference>
<dbReference type="GeneID" id="836394"/>
<dbReference type="Gramene" id="AT5G62730.1">
    <property type="protein sequence ID" value="AT5G62730.1"/>
    <property type="gene ID" value="AT5G62730"/>
</dbReference>
<dbReference type="KEGG" id="ath:AT5G62730"/>
<dbReference type="Araport" id="AT5G62730"/>
<dbReference type="TAIR" id="AT5G62730"/>
<dbReference type="eggNOG" id="KOG1237">
    <property type="taxonomic scope" value="Eukaryota"/>
</dbReference>
<dbReference type="HOGENOM" id="CLU_009313_4_0_1"/>
<dbReference type="InParanoid" id="Q9FM20"/>
<dbReference type="PhylomeDB" id="Q9FM20"/>
<dbReference type="PRO" id="PR:Q9FM20"/>
<dbReference type="Proteomes" id="UP000006548">
    <property type="component" value="Chromosome 5"/>
</dbReference>
<dbReference type="ExpressionAtlas" id="Q9FM20">
    <property type="expression patterns" value="baseline and differential"/>
</dbReference>
<dbReference type="GO" id="GO:0016020">
    <property type="term" value="C:membrane"/>
    <property type="evidence" value="ECO:0007669"/>
    <property type="project" value="UniProtKB-SubCell"/>
</dbReference>
<dbReference type="GO" id="GO:0022857">
    <property type="term" value="F:transmembrane transporter activity"/>
    <property type="evidence" value="ECO:0007669"/>
    <property type="project" value="InterPro"/>
</dbReference>
<dbReference type="CDD" id="cd17414">
    <property type="entry name" value="MFS_NPF4"/>
    <property type="match status" value="1"/>
</dbReference>
<dbReference type="Gene3D" id="1.20.1250.20">
    <property type="entry name" value="MFS general substrate transporter like domains"/>
    <property type="match status" value="1"/>
</dbReference>
<dbReference type="InterPro" id="IPR036259">
    <property type="entry name" value="MFS_trans_sf"/>
</dbReference>
<dbReference type="InterPro" id="IPR000109">
    <property type="entry name" value="POT_fam"/>
</dbReference>
<dbReference type="PANTHER" id="PTHR11654">
    <property type="entry name" value="OLIGOPEPTIDE TRANSPORTER-RELATED"/>
    <property type="match status" value="1"/>
</dbReference>
<dbReference type="Pfam" id="PF00854">
    <property type="entry name" value="PTR2"/>
    <property type="match status" value="1"/>
</dbReference>
<dbReference type="SUPFAM" id="SSF103473">
    <property type="entry name" value="MFS general substrate transporter"/>
    <property type="match status" value="1"/>
</dbReference>
<sequence>MSTNYTAINHILHFHSPNSCFLMIMSLEFEQMDEANRLSAWNGYVDWRSRPALRGRHGGMLAASFVLVVEVLENLAFLANASNLVLYLSTKMGFSPSGAANAVTAFMGTAFFLALLGGFLADAFFTTFHIYLVSAAIEFLGLMVLTVQAHEHSTEPWSRVFLFVGLYLVALGVGGIKGSLPPHGAEQFDEETSSGRRQRSFFFNYFIFSLSCGALIAVTVVVWLEDNKGWSYGFGVSTAAILISVPVFLAGSRVYRLKVPSGSPITTLFKVLTAALYAKYKKRRTSRIVVTCHTRNDCDDSVTKQNCDGDDGFLGSFLGEVVRERESLPRPLRCTEEQVKDVKIVIKILPIFMSTIMLNCCLAQLSTFSVQQASTMNTKLGSFTVPPAALPVFPVVFMMILAPTYNHLLLPLARKSTKTETGITHLQRIGTGLVLSIVAMAVAALVETKRKHVVVSCCSNNNSSSYSSSPLPITFLWVAIQYVFLGSADLFTLAGMMEFFFTEAPSTMRSLATSLSWASLAMGYYFSSVLVSAVNFVTGLNHHNPWLLGENLNQYHLERFYWLMCVLSGINFLHYLFWASRYVYRSNQG</sequence>
<gene>
    <name type="primary">NPF4.7</name>
    <name type="ordered locus">At5g62730</name>
    <name type="ORF">MQB2.30</name>
</gene>
<accession>Q9FM20</accession>
<proteinExistence type="evidence at transcript level"/>
<organism>
    <name type="scientific">Arabidopsis thaliana</name>
    <name type="common">Mouse-ear cress</name>
    <dbReference type="NCBI Taxonomy" id="3702"/>
    <lineage>
        <taxon>Eukaryota</taxon>
        <taxon>Viridiplantae</taxon>
        <taxon>Streptophyta</taxon>
        <taxon>Embryophyta</taxon>
        <taxon>Tracheophyta</taxon>
        <taxon>Spermatophyta</taxon>
        <taxon>Magnoliopsida</taxon>
        <taxon>eudicotyledons</taxon>
        <taxon>Gunneridae</taxon>
        <taxon>Pentapetalae</taxon>
        <taxon>rosids</taxon>
        <taxon>malvids</taxon>
        <taxon>Brassicales</taxon>
        <taxon>Brassicaceae</taxon>
        <taxon>Camelineae</taxon>
        <taxon>Arabidopsis</taxon>
    </lineage>
</organism>
<keyword id="KW-0472">Membrane</keyword>
<keyword id="KW-1185">Reference proteome</keyword>
<keyword id="KW-0812">Transmembrane</keyword>
<keyword id="KW-1133">Transmembrane helix</keyword>
<keyword id="KW-0813">Transport</keyword>
<comment type="subcellular location">
    <subcellularLocation>
        <location evidence="1">Membrane</location>
        <topology evidence="1">Multi-pass membrane protein</topology>
    </subcellularLocation>
</comment>
<comment type="tissue specificity">
    <text evidence="3">Expressed in flowers.</text>
</comment>
<comment type="similarity">
    <text evidence="4">Belongs to the major facilitator superfamily. Proton-dependent oligopeptide transporter (POT/PTR) (TC 2.A.17) family.</text>
</comment>
<comment type="sequence caution" evidence="4">
    <conflict type="erroneous initiation">
        <sequence resource="EMBL-CDS" id="BAB10842"/>
    </conflict>
    <text>Truncated N-terminus.</text>
</comment>